<proteinExistence type="predicted"/>
<comment type="function">
    <text>This protein maintains pilus integrity and thus is an important participant in pilus assembly. It may function as molecular chaperone directly or indirectly in the correct assembly of PapA subunits.</text>
</comment>
<comment type="subcellular location">
    <subcellularLocation>
        <location>Periplasm</location>
    </subcellularLocation>
</comment>
<dbReference type="EMBL" id="X51704">
    <property type="protein sequence ID" value="CAA36000.1"/>
    <property type="molecule type" value="Genomic_DNA"/>
</dbReference>
<dbReference type="EMBL" id="X61239">
    <property type="protein sequence ID" value="CAA43566.1"/>
    <property type="molecule type" value="Genomic_DNA"/>
</dbReference>
<dbReference type="PIR" id="S25220">
    <property type="entry name" value="S16399"/>
</dbReference>
<dbReference type="GO" id="GO:0042597">
    <property type="term" value="C:periplasmic space"/>
    <property type="evidence" value="ECO:0007669"/>
    <property type="project" value="UniProtKB-SubCell"/>
</dbReference>
<dbReference type="InterPro" id="IPR029224">
    <property type="entry name" value="PapJ"/>
</dbReference>
<dbReference type="Pfam" id="PF14855">
    <property type="entry name" value="PapJ"/>
    <property type="match status" value="1"/>
</dbReference>
<feature type="signal peptide">
    <location>
        <begin position="1"/>
        <end position="27"/>
    </location>
</feature>
<feature type="chain" id="PRO_0000022006" description="Protein PapJ">
    <location>
        <begin position="28"/>
        <end position="193"/>
    </location>
</feature>
<protein>
    <recommendedName>
        <fullName>Protein PapJ</fullName>
    </recommendedName>
</protein>
<sequence length="193" mass="20730">MVVNKTTAVLYLIALSLSGFIHTFLRAEERGIYDDVFTADALRHYRINERGGRTGSLTCSGALLSSPCTLVSNEVPLSLRPENHSAAAGAPLMLRLAGCGDGGALQPGKRGVAMTVSGSLVTGPGSGSALLPDRKLSGCDHLVIHDGDTFLLCRPDRRQEEMLAAWRKRATQEGEYSDARSNPAMLRLSIKYE</sequence>
<accession>P17543</accession>
<organism>
    <name type="scientific">Escherichia coli</name>
    <dbReference type="NCBI Taxonomy" id="562"/>
    <lineage>
        <taxon>Bacteria</taxon>
        <taxon>Pseudomonadati</taxon>
        <taxon>Pseudomonadota</taxon>
        <taxon>Gammaproteobacteria</taxon>
        <taxon>Enterobacterales</taxon>
        <taxon>Enterobacteriaceae</taxon>
        <taxon>Escherichia</taxon>
    </lineage>
</organism>
<gene>
    <name type="primary">papJ</name>
</gene>
<reference key="1">
    <citation type="journal article" date="1990" name="Mol. Microbiol.">
        <title>Integrity of Escherichia coli P pili during biogenesis: properties and role of PapJ.</title>
        <authorList>
            <person name="Tennent J.M."/>
            <person name="Lindberg F."/>
            <person name="Normark S."/>
        </authorList>
    </citation>
    <scope>NUCLEOTIDE SEQUENCE [GENOMIC DNA]</scope>
    <source>
        <strain>ATCC 700336 / J96 / UPEC</strain>
    </source>
</reference>
<reference key="2">
    <citation type="journal article" date="1992" name="Mol. Microbiol.">
        <title>Horizontal gene transfer of the Escherichia coli pap and prs pili operons as a mechanism for the development of tissue-specific adhesive properties.</title>
        <authorList>
            <person name="Marklund B.-I."/>
            <person name="Tennent J.M."/>
            <person name="Garcia E."/>
            <person name="Hamers A."/>
            <person name="Baga M."/>
            <person name="Lindberg F."/>
            <person name="Gaastra W."/>
            <person name="Normark S."/>
        </authorList>
    </citation>
    <scope>NUCLEOTIDE SEQUENCE [GENOMIC DNA]</scope>
    <source>
        <strain>ATCC 700336 / J96 / UPEC</strain>
    </source>
</reference>
<name>PAPJ_ECOLX</name>
<keyword id="KW-0143">Chaperone</keyword>
<keyword id="KW-0574">Periplasm</keyword>
<keyword id="KW-0732">Signal</keyword>